<evidence type="ECO:0000255" key="1">
    <source>
        <dbReference type="HAMAP-Rule" id="MF_00953"/>
    </source>
</evidence>
<evidence type="ECO:0000255" key="2">
    <source>
        <dbReference type="PROSITE-ProRule" id="PRU01383"/>
    </source>
</evidence>
<evidence type="ECO:0000256" key="3">
    <source>
        <dbReference type="SAM" id="MobiDB-lite"/>
    </source>
</evidence>
<organism>
    <name type="scientific">Staphylococcus aureus (strain MW2)</name>
    <dbReference type="NCBI Taxonomy" id="196620"/>
    <lineage>
        <taxon>Bacteria</taxon>
        <taxon>Bacillati</taxon>
        <taxon>Bacillota</taxon>
        <taxon>Bacilli</taxon>
        <taxon>Bacillales</taxon>
        <taxon>Staphylococcaceae</taxon>
        <taxon>Staphylococcus</taxon>
    </lineage>
</organism>
<reference key="1">
    <citation type="journal article" date="2002" name="Lancet">
        <title>Genome and virulence determinants of high virulence community-acquired MRSA.</title>
        <authorList>
            <person name="Baba T."/>
            <person name="Takeuchi F."/>
            <person name="Kuroda M."/>
            <person name="Yuzawa H."/>
            <person name="Aoki K."/>
            <person name="Oguchi A."/>
            <person name="Nagai Y."/>
            <person name="Iwama N."/>
            <person name="Asano K."/>
            <person name="Naimi T."/>
            <person name="Kuroda H."/>
            <person name="Cui L."/>
            <person name="Yamamoto K."/>
            <person name="Hiramatsu K."/>
        </authorList>
    </citation>
    <scope>NUCLEOTIDE SEQUENCE [LARGE SCALE GENOMIC DNA]</scope>
    <source>
        <strain>MW2</strain>
    </source>
</reference>
<name>TOP3_STAAW</name>
<accession>Q7A075</accession>
<feature type="chain" id="PRO_0000286375" description="DNA topoisomerase 3">
    <location>
        <begin position="1"/>
        <end position="711"/>
    </location>
</feature>
<feature type="domain" description="Toprim" evidence="1">
    <location>
        <begin position="2"/>
        <end position="135"/>
    </location>
</feature>
<feature type="domain" description="Topo IA-type catalytic" evidence="2">
    <location>
        <begin position="152"/>
        <end position="580"/>
    </location>
</feature>
<feature type="region of interest" description="Interaction with DNA" evidence="1">
    <location>
        <begin position="186"/>
        <end position="191"/>
    </location>
</feature>
<feature type="region of interest" description="Disordered" evidence="3">
    <location>
        <begin position="691"/>
        <end position="711"/>
    </location>
</feature>
<feature type="active site" description="O-(5'-phospho-DNA)-tyrosine intermediate" evidence="2">
    <location>
        <position position="305"/>
    </location>
</feature>
<feature type="binding site" evidence="1">
    <location>
        <position position="8"/>
    </location>
    <ligand>
        <name>Mg(2+)</name>
        <dbReference type="ChEBI" id="CHEBI:18420"/>
        <note>catalytic</note>
    </ligand>
</feature>
<feature type="binding site" evidence="1">
    <location>
        <position position="104"/>
    </location>
    <ligand>
        <name>Mg(2+)</name>
        <dbReference type="ChEBI" id="CHEBI:18420"/>
        <note>catalytic</note>
    </ligand>
</feature>
<feature type="site" description="Interaction with DNA" evidence="1">
    <location>
        <position position="60"/>
    </location>
</feature>
<feature type="site" description="Interaction with DNA" evidence="1">
    <location>
        <position position="167"/>
    </location>
</feature>
<feature type="site" description="Interaction with DNA" evidence="1">
    <location>
        <position position="175"/>
    </location>
</feature>
<feature type="site" description="Interaction with DNA" evidence="1">
    <location>
        <position position="307"/>
    </location>
</feature>
<comment type="function">
    <text evidence="1">Releases the supercoiling and torsional tension of DNA, which is introduced during the DNA replication and transcription, by transiently cleaving and rejoining one strand of the DNA duplex. Introduces a single-strand break via transesterification at a target site in duplex DNA. The scissile phosphodiester is attacked by the catalytic tyrosine of the enzyme, resulting in the formation of a DNA-(5'-phosphotyrosyl)-enzyme intermediate and the expulsion of a 3'-OH DNA strand. The free DNA strand then undergoes passage around the unbroken strand, thus removing DNA supercoils. Finally, in the religation step, the DNA 3'-OH attacks the covalent intermediate to expel the active-site tyrosine and restore the DNA phosphodiester backbone.</text>
</comment>
<comment type="catalytic activity">
    <reaction evidence="1">
        <text>ATP-independent breakage of single-stranded DNA, followed by passage and rejoining.</text>
        <dbReference type="EC" id="5.6.2.1"/>
    </reaction>
</comment>
<comment type="cofactor">
    <cofactor evidence="1">
        <name>Mg(2+)</name>
        <dbReference type="ChEBI" id="CHEBI:18420"/>
    </cofactor>
</comment>
<comment type="similarity">
    <text evidence="1 2">Belongs to the type IA topoisomerase family.</text>
</comment>
<sequence>MKSLILAEKPSVARDIADALQINQKRNGYFENNQYIVTWALGHLVTNATPEQYDKNLKEWRLEDLPIIPKYMKTVVIGKTSKQFKTVKALILDNKVKDIIIATDAGREGELVARLILDKVGNKKPIRRLWISSVTKKAIQQGFKNLKDGRQYNDLYYAALARSEADWIVGINATRALTTKYDAQLSLGRVQTPTIQLVNTRQQEINQFKPQQYFTLSLTVKGFDFQLESNQRYTNKETLEQMVNNLKNVDGKIKSVATKHKKSYPQSLYNLTDLQQDMYRRYKIGPKETLNTLQSLYERHKVVTYPRTDSNYLTTDMVDTMKERIQATMATTYKDQARPLMSKTFSSKMSIFNNQKVSDHHAIIPTEVRPVMSDLSNRELKLYDMIVERFLEALMPPHEYDAITVTLEVAGHTFVLKENVTTVLGFKSIRQGESITEMQQPFSEGDEVKISKTNIREHETTPPEYFNEGSLLKAMENPQNFIQLKDKKYAQTLKQTGGIGTVATRADIIDKLFNMNAIESRDGKIKVTSKGKQILELAPEELTSPLLTAQWEEKLLLIERGKYQAKTFINEMKDFTKDVVNGIKNSDRKYKHDNLTTTECPTCGKFMIKVKTKNGQMLVCQDPSCKTKKNVQRKTNARCPNCKKKLTLFGKGKEAVYRCVCGHSETQAHMDQRMKSKSSGKVSRKEMKKYMNKNEGLDNNPFKDALKNLNL</sequence>
<protein>
    <recommendedName>
        <fullName evidence="1">DNA topoisomerase 3</fullName>
        <ecNumber evidence="1">5.6.2.1</ecNumber>
    </recommendedName>
    <alternativeName>
        <fullName evidence="1">DNA topoisomerase III</fullName>
    </alternativeName>
</protein>
<keyword id="KW-0238">DNA-binding</keyword>
<keyword id="KW-0413">Isomerase</keyword>
<keyword id="KW-0460">Magnesium</keyword>
<keyword id="KW-0479">Metal-binding</keyword>
<keyword id="KW-0799">Topoisomerase</keyword>
<proteinExistence type="inferred from homology"/>
<gene>
    <name evidence="1" type="primary">topB</name>
    <name type="ordered locus">MW2173</name>
</gene>
<dbReference type="EC" id="5.6.2.1" evidence="1"/>
<dbReference type="EMBL" id="BA000033">
    <property type="protein sequence ID" value="BAB96038.1"/>
    <property type="molecule type" value="Genomic_DNA"/>
</dbReference>
<dbReference type="RefSeq" id="WP_000838479.1">
    <property type="nucleotide sequence ID" value="NC_003923.1"/>
</dbReference>
<dbReference type="SMR" id="Q7A075"/>
<dbReference type="KEGG" id="sam:MW2173"/>
<dbReference type="HOGENOM" id="CLU_002929_5_2_9"/>
<dbReference type="GO" id="GO:0043597">
    <property type="term" value="C:cytoplasmic replication fork"/>
    <property type="evidence" value="ECO:0007669"/>
    <property type="project" value="TreeGrafter"/>
</dbReference>
<dbReference type="GO" id="GO:0003677">
    <property type="term" value="F:DNA binding"/>
    <property type="evidence" value="ECO:0007669"/>
    <property type="project" value="UniProtKB-KW"/>
</dbReference>
<dbReference type="GO" id="GO:0003917">
    <property type="term" value="F:DNA topoisomerase type I (single strand cut, ATP-independent) activity"/>
    <property type="evidence" value="ECO:0007669"/>
    <property type="project" value="UniProtKB-UniRule"/>
</dbReference>
<dbReference type="GO" id="GO:0000287">
    <property type="term" value="F:magnesium ion binding"/>
    <property type="evidence" value="ECO:0007669"/>
    <property type="project" value="UniProtKB-UniRule"/>
</dbReference>
<dbReference type="GO" id="GO:0006310">
    <property type="term" value="P:DNA recombination"/>
    <property type="evidence" value="ECO:0007669"/>
    <property type="project" value="TreeGrafter"/>
</dbReference>
<dbReference type="GO" id="GO:0006281">
    <property type="term" value="P:DNA repair"/>
    <property type="evidence" value="ECO:0007669"/>
    <property type="project" value="TreeGrafter"/>
</dbReference>
<dbReference type="GO" id="GO:0006265">
    <property type="term" value="P:DNA topological change"/>
    <property type="evidence" value="ECO:0007669"/>
    <property type="project" value="UniProtKB-UniRule"/>
</dbReference>
<dbReference type="CDD" id="cd00186">
    <property type="entry name" value="TOP1Ac"/>
    <property type="match status" value="1"/>
</dbReference>
<dbReference type="CDD" id="cd03362">
    <property type="entry name" value="TOPRIM_TopoIA_TopoIII"/>
    <property type="match status" value="1"/>
</dbReference>
<dbReference type="Gene3D" id="3.40.50.140">
    <property type="match status" value="1"/>
</dbReference>
<dbReference type="Gene3D" id="1.10.460.10">
    <property type="entry name" value="Topoisomerase I, domain 2"/>
    <property type="match status" value="1"/>
</dbReference>
<dbReference type="Gene3D" id="2.70.20.10">
    <property type="entry name" value="Topoisomerase I, domain 3"/>
    <property type="match status" value="1"/>
</dbReference>
<dbReference type="Gene3D" id="1.10.290.10">
    <property type="entry name" value="Topoisomerase I, domain 4"/>
    <property type="match status" value="1"/>
</dbReference>
<dbReference type="HAMAP" id="MF_00953">
    <property type="entry name" value="Topoisom_3_prok"/>
    <property type="match status" value="1"/>
</dbReference>
<dbReference type="InterPro" id="IPR000380">
    <property type="entry name" value="Topo_IA"/>
</dbReference>
<dbReference type="InterPro" id="IPR003601">
    <property type="entry name" value="Topo_IA_2"/>
</dbReference>
<dbReference type="InterPro" id="IPR023406">
    <property type="entry name" value="Topo_IA_AS"/>
</dbReference>
<dbReference type="InterPro" id="IPR013497">
    <property type="entry name" value="Topo_IA_cen"/>
</dbReference>
<dbReference type="InterPro" id="IPR013824">
    <property type="entry name" value="Topo_IA_cen_sub1"/>
</dbReference>
<dbReference type="InterPro" id="IPR013825">
    <property type="entry name" value="Topo_IA_cen_sub2"/>
</dbReference>
<dbReference type="InterPro" id="IPR013826">
    <property type="entry name" value="Topo_IA_cen_sub3"/>
</dbReference>
<dbReference type="InterPro" id="IPR023405">
    <property type="entry name" value="Topo_IA_core_domain"/>
</dbReference>
<dbReference type="InterPro" id="IPR003602">
    <property type="entry name" value="Topo_IA_DNA-bd_dom"/>
</dbReference>
<dbReference type="InterPro" id="IPR005738">
    <property type="entry name" value="TopoIII"/>
</dbReference>
<dbReference type="InterPro" id="IPR006171">
    <property type="entry name" value="TOPRIM_dom"/>
</dbReference>
<dbReference type="InterPro" id="IPR034144">
    <property type="entry name" value="TOPRIM_TopoIII"/>
</dbReference>
<dbReference type="NCBIfam" id="NF005829">
    <property type="entry name" value="PRK07726.1"/>
    <property type="match status" value="1"/>
</dbReference>
<dbReference type="NCBIfam" id="TIGR01056">
    <property type="entry name" value="topB"/>
    <property type="match status" value="1"/>
</dbReference>
<dbReference type="PANTHER" id="PTHR11390:SF21">
    <property type="entry name" value="DNA TOPOISOMERASE 3-ALPHA"/>
    <property type="match status" value="1"/>
</dbReference>
<dbReference type="PANTHER" id="PTHR11390">
    <property type="entry name" value="PROKARYOTIC DNA TOPOISOMERASE"/>
    <property type="match status" value="1"/>
</dbReference>
<dbReference type="Pfam" id="PF01131">
    <property type="entry name" value="Topoisom_bac"/>
    <property type="match status" value="1"/>
</dbReference>
<dbReference type="Pfam" id="PF01751">
    <property type="entry name" value="Toprim"/>
    <property type="match status" value="1"/>
</dbReference>
<dbReference type="PRINTS" id="PR00417">
    <property type="entry name" value="PRTPISMRASEI"/>
</dbReference>
<dbReference type="SMART" id="SM00437">
    <property type="entry name" value="TOP1Ac"/>
    <property type="match status" value="1"/>
</dbReference>
<dbReference type="SMART" id="SM00436">
    <property type="entry name" value="TOP1Bc"/>
    <property type="match status" value="1"/>
</dbReference>
<dbReference type="SMART" id="SM00493">
    <property type="entry name" value="TOPRIM"/>
    <property type="match status" value="1"/>
</dbReference>
<dbReference type="SUPFAM" id="SSF56712">
    <property type="entry name" value="Prokaryotic type I DNA topoisomerase"/>
    <property type="match status" value="1"/>
</dbReference>
<dbReference type="PROSITE" id="PS00396">
    <property type="entry name" value="TOPO_IA_1"/>
    <property type="match status" value="1"/>
</dbReference>
<dbReference type="PROSITE" id="PS52039">
    <property type="entry name" value="TOPO_IA_2"/>
    <property type="match status" value="1"/>
</dbReference>
<dbReference type="PROSITE" id="PS50880">
    <property type="entry name" value="TOPRIM"/>
    <property type="match status" value="1"/>
</dbReference>